<evidence type="ECO:0000255" key="1">
    <source>
        <dbReference type="HAMAP-Rule" id="MF_00028"/>
    </source>
</evidence>
<organism>
    <name type="scientific">Thermococcus onnurineus (strain NA1)</name>
    <dbReference type="NCBI Taxonomy" id="523850"/>
    <lineage>
        <taxon>Archaea</taxon>
        <taxon>Methanobacteriati</taxon>
        <taxon>Methanobacteriota</taxon>
        <taxon>Thermococci</taxon>
        <taxon>Thermococcales</taxon>
        <taxon>Thermococcaceae</taxon>
        <taxon>Thermococcus</taxon>
    </lineage>
</organism>
<dbReference type="EMBL" id="CP000855">
    <property type="protein sequence ID" value="ACJ16175.1"/>
    <property type="molecule type" value="Genomic_DNA"/>
</dbReference>
<dbReference type="RefSeq" id="WP_012571647.1">
    <property type="nucleotide sequence ID" value="NC_011529.1"/>
</dbReference>
<dbReference type="STRING" id="523850.TON_0687"/>
<dbReference type="GeneID" id="7016988"/>
<dbReference type="KEGG" id="ton:TON_0687"/>
<dbReference type="PATRIC" id="fig|523850.10.peg.690"/>
<dbReference type="eggNOG" id="arCOG00105">
    <property type="taxonomic scope" value="Archaea"/>
</dbReference>
<dbReference type="HOGENOM" id="CLU_019250_2_2_2"/>
<dbReference type="OrthoDB" id="53136at2157"/>
<dbReference type="UniPathway" id="UPA00148"/>
<dbReference type="Proteomes" id="UP000002727">
    <property type="component" value="Chromosome"/>
</dbReference>
<dbReference type="GO" id="GO:0015420">
    <property type="term" value="F:ABC-type vitamin B12 transporter activity"/>
    <property type="evidence" value="ECO:0007669"/>
    <property type="project" value="UniProtKB-UniRule"/>
</dbReference>
<dbReference type="GO" id="GO:0003824">
    <property type="term" value="F:catalytic activity"/>
    <property type="evidence" value="ECO:0007669"/>
    <property type="project" value="InterPro"/>
</dbReference>
<dbReference type="GO" id="GO:0009236">
    <property type="term" value="P:cobalamin biosynthetic process"/>
    <property type="evidence" value="ECO:0007669"/>
    <property type="project" value="UniProtKB-UniRule"/>
</dbReference>
<dbReference type="CDD" id="cd05389">
    <property type="entry name" value="CobQ_N"/>
    <property type="match status" value="1"/>
</dbReference>
<dbReference type="CDD" id="cd01750">
    <property type="entry name" value="GATase1_CobQ"/>
    <property type="match status" value="1"/>
</dbReference>
<dbReference type="Gene3D" id="3.40.50.880">
    <property type="match status" value="1"/>
</dbReference>
<dbReference type="Gene3D" id="3.40.50.300">
    <property type="entry name" value="P-loop containing nucleotide triphosphate hydrolases"/>
    <property type="match status" value="1"/>
</dbReference>
<dbReference type="HAMAP" id="MF_00028">
    <property type="entry name" value="CobQ"/>
    <property type="match status" value="1"/>
</dbReference>
<dbReference type="InterPro" id="IPR029062">
    <property type="entry name" value="Class_I_gatase-like"/>
</dbReference>
<dbReference type="InterPro" id="IPR002586">
    <property type="entry name" value="CobQ/CobB/MinD/ParA_Nub-bd_dom"/>
</dbReference>
<dbReference type="InterPro" id="IPR033949">
    <property type="entry name" value="CobQ_GATase1"/>
</dbReference>
<dbReference type="InterPro" id="IPR047045">
    <property type="entry name" value="CobQ_N"/>
</dbReference>
<dbReference type="InterPro" id="IPR004459">
    <property type="entry name" value="CobQ_synth"/>
</dbReference>
<dbReference type="InterPro" id="IPR011698">
    <property type="entry name" value="GATase_3"/>
</dbReference>
<dbReference type="InterPro" id="IPR027417">
    <property type="entry name" value="P-loop_NTPase"/>
</dbReference>
<dbReference type="NCBIfam" id="TIGR00313">
    <property type="entry name" value="cobQ"/>
    <property type="match status" value="1"/>
</dbReference>
<dbReference type="NCBIfam" id="NF001989">
    <property type="entry name" value="PRK00784.1"/>
    <property type="match status" value="1"/>
</dbReference>
<dbReference type="PANTHER" id="PTHR21343:SF1">
    <property type="entry name" value="COBYRIC ACID SYNTHASE"/>
    <property type="match status" value="1"/>
</dbReference>
<dbReference type="PANTHER" id="PTHR21343">
    <property type="entry name" value="DETHIOBIOTIN SYNTHETASE"/>
    <property type="match status" value="1"/>
</dbReference>
<dbReference type="Pfam" id="PF01656">
    <property type="entry name" value="CbiA"/>
    <property type="match status" value="1"/>
</dbReference>
<dbReference type="Pfam" id="PF07685">
    <property type="entry name" value="GATase_3"/>
    <property type="match status" value="1"/>
</dbReference>
<dbReference type="SUPFAM" id="SSF52317">
    <property type="entry name" value="Class I glutamine amidotransferase-like"/>
    <property type="match status" value="1"/>
</dbReference>
<dbReference type="SUPFAM" id="SSF52540">
    <property type="entry name" value="P-loop containing nucleoside triphosphate hydrolases"/>
    <property type="match status" value="1"/>
</dbReference>
<dbReference type="PROSITE" id="PS51274">
    <property type="entry name" value="GATASE_COBBQ"/>
    <property type="match status" value="1"/>
</dbReference>
<comment type="function">
    <text evidence="1">Catalyzes amidations at positions B, D, E, and G on adenosylcobyrinic A,C-diamide. NH(2) groups are provided by glutamine, and one molecule of ATP is hydrogenolyzed for each amidation.</text>
</comment>
<comment type="pathway">
    <text evidence="1">Cofactor biosynthesis; adenosylcobalamin biosynthesis.</text>
</comment>
<comment type="similarity">
    <text evidence="1">Belongs to the CobB/CobQ family. CobQ subfamily.</text>
</comment>
<name>COBQ_THEON</name>
<reference key="1">
    <citation type="journal article" date="2008" name="J. Bacteriol.">
        <title>The complete genome sequence of Thermococcus onnurineus NA1 reveals a mixed heterotrophic and carboxydotrophic metabolism.</title>
        <authorList>
            <person name="Lee H.S."/>
            <person name="Kang S.G."/>
            <person name="Bae S.S."/>
            <person name="Lim J.K."/>
            <person name="Cho Y."/>
            <person name="Kim Y.J."/>
            <person name="Jeon J.H."/>
            <person name="Cha S.-S."/>
            <person name="Kwon K.K."/>
            <person name="Kim H.-T."/>
            <person name="Park C.-J."/>
            <person name="Lee H.-W."/>
            <person name="Kim S.I."/>
            <person name="Chun J."/>
            <person name="Colwell R.R."/>
            <person name="Kim S.-J."/>
            <person name="Lee J.-H."/>
        </authorList>
    </citation>
    <scope>NUCLEOTIDE SEQUENCE [LARGE SCALE GENOMIC DNA]</scope>
    <source>
        <strain>NA1</strain>
    </source>
</reference>
<keyword id="KW-0169">Cobalamin biosynthesis</keyword>
<keyword id="KW-0315">Glutamine amidotransferase</keyword>
<proteinExistence type="inferred from homology"/>
<feature type="chain" id="PRO_1000090250" description="Probable cobyric acid synthase">
    <location>
        <begin position="1"/>
        <end position="484"/>
    </location>
</feature>
<feature type="domain" description="GATase cobBQ-type" evidence="1">
    <location>
        <begin position="247"/>
        <end position="433"/>
    </location>
</feature>
<feature type="active site" description="Nucleophile" evidence="1">
    <location>
        <position position="325"/>
    </location>
</feature>
<feature type="active site" evidence="1">
    <location>
        <position position="425"/>
    </location>
</feature>
<gene>
    <name evidence="1" type="primary">cobQ</name>
    <name type="ordered locus">TON_0687</name>
</gene>
<accession>B6YV97</accession>
<protein>
    <recommendedName>
        <fullName evidence="1">Probable cobyric acid synthase</fullName>
    </recommendedName>
</protein>
<sequence>MGKALMVQGTSSGAGKSLLVMALCRIFSNLGYDVVPFKSQNMSLNSAPSIEGGEISRAQYLQAVACRKKPSVRFNPILLKPEGNMRSQVVFMGKPIGSVSAREYMLSRKEELFRKAMKVLDELMVEHEIVIIEGAGSPVEINLKDYDIANMRVARHAKAKTILVTDIDRGGSFASIVGTMELLSKEERNLILGFVFNKFRGDASLLEPGFEYLEKRYGKPTLGVVPCIEHKLPEEDSLTSFPKVNGELHIQIVKLPHISNFTDFEPLHWANGVDYVTKAEEIEGDLIIIPGSKNTVEDLLWMRENGIEDAIIQAHHEGSFVVGICGGFQMLGEKIIDNVESKRGEVKGIGLLPAKTIFTPVKRTNHLKAEILWEPAKRMSVEGYEIRMGRSTSERPFSIIREINGAKAFEPEGALGERTFGTYLHGIFHNFAFTERLLNFLRAEKGLEPISVGGWSIEEEIERFARVVEKNLDVGYIISELGLG</sequence>